<organism>
    <name type="scientific">Xanthomonas oryzae pv. oryzae (strain MAFF 311018)</name>
    <dbReference type="NCBI Taxonomy" id="342109"/>
    <lineage>
        <taxon>Bacteria</taxon>
        <taxon>Pseudomonadati</taxon>
        <taxon>Pseudomonadota</taxon>
        <taxon>Gammaproteobacteria</taxon>
        <taxon>Lysobacterales</taxon>
        <taxon>Lysobacteraceae</taxon>
        <taxon>Xanthomonas</taxon>
    </lineage>
</organism>
<reference key="1">
    <citation type="journal article" date="2005" name="Jpn. Agric. Res. Q.">
        <title>Genome sequence of Xanthomonas oryzae pv. oryzae suggests contribution of large numbers of effector genes and insertion sequences to its race diversity.</title>
        <authorList>
            <person name="Ochiai H."/>
            <person name="Inoue Y."/>
            <person name="Takeya M."/>
            <person name="Sasaki A."/>
            <person name="Kaku H."/>
        </authorList>
    </citation>
    <scope>NUCLEOTIDE SEQUENCE [LARGE SCALE GENOMIC DNA]</scope>
    <source>
        <strain>MAFF 311018</strain>
    </source>
</reference>
<feature type="chain" id="PRO_1000085008" description="Acetyl-coenzyme A synthetase">
    <location>
        <begin position="1"/>
        <end position="647"/>
    </location>
</feature>
<feature type="binding site" evidence="1">
    <location>
        <begin position="190"/>
        <end position="193"/>
    </location>
    <ligand>
        <name>CoA</name>
        <dbReference type="ChEBI" id="CHEBI:57287"/>
    </ligand>
</feature>
<feature type="binding site" evidence="1">
    <location>
        <position position="310"/>
    </location>
    <ligand>
        <name>CoA</name>
        <dbReference type="ChEBI" id="CHEBI:57287"/>
    </ligand>
</feature>
<feature type="binding site" evidence="1">
    <location>
        <position position="334"/>
    </location>
    <ligand>
        <name>CoA</name>
        <dbReference type="ChEBI" id="CHEBI:57287"/>
    </ligand>
</feature>
<feature type="binding site" evidence="1">
    <location>
        <begin position="386"/>
        <end position="388"/>
    </location>
    <ligand>
        <name>ATP</name>
        <dbReference type="ChEBI" id="CHEBI:30616"/>
    </ligand>
</feature>
<feature type="binding site" evidence="1">
    <location>
        <begin position="410"/>
        <end position="415"/>
    </location>
    <ligand>
        <name>ATP</name>
        <dbReference type="ChEBI" id="CHEBI:30616"/>
    </ligand>
</feature>
<feature type="binding site" evidence="1">
    <location>
        <position position="499"/>
    </location>
    <ligand>
        <name>ATP</name>
        <dbReference type="ChEBI" id="CHEBI:30616"/>
    </ligand>
</feature>
<feature type="binding site" evidence="1">
    <location>
        <position position="514"/>
    </location>
    <ligand>
        <name>ATP</name>
        <dbReference type="ChEBI" id="CHEBI:30616"/>
    </ligand>
</feature>
<feature type="binding site" evidence="1">
    <location>
        <position position="522"/>
    </location>
    <ligand>
        <name>CoA</name>
        <dbReference type="ChEBI" id="CHEBI:57287"/>
    </ligand>
</feature>
<feature type="binding site" evidence="1">
    <location>
        <position position="525"/>
    </location>
    <ligand>
        <name>ATP</name>
        <dbReference type="ChEBI" id="CHEBI:30616"/>
    </ligand>
</feature>
<feature type="binding site" evidence="1">
    <location>
        <position position="536"/>
    </location>
    <ligand>
        <name>Mg(2+)</name>
        <dbReference type="ChEBI" id="CHEBI:18420"/>
    </ligand>
</feature>
<feature type="binding site" evidence="1">
    <location>
        <position position="538"/>
    </location>
    <ligand>
        <name>Mg(2+)</name>
        <dbReference type="ChEBI" id="CHEBI:18420"/>
    </ligand>
</feature>
<feature type="binding site" evidence="1">
    <location>
        <position position="541"/>
    </location>
    <ligand>
        <name>Mg(2+)</name>
        <dbReference type="ChEBI" id="CHEBI:18420"/>
    </ligand>
</feature>
<feature type="binding site" evidence="1">
    <location>
        <position position="583"/>
    </location>
    <ligand>
        <name>CoA</name>
        <dbReference type="ChEBI" id="CHEBI:57287"/>
    </ligand>
</feature>
<feature type="modified residue" description="N6-acetyllysine" evidence="1">
    <location>
        <position position="608"/>
    </location>
</feature>
<sequence length="647" mass="71366">MADVYPVDPAFAADARVTREQYAALYRESIEHPEQFWGKAAQRLEWFKQPTQVKDVSYALDDFHIRWFGDGELNASVNCLDRQLATRGDKTALLFEPDSPDAASYPVTYRQLYERVCKLGNALRNLGVKKGDRVTIYLPMIVDAAVAMLACARIGAVHSVVFGGFAANSIADRVIDCQSKLIITADEGLRGGKKIPLKANVDAALKIPGTNTIETVLVVRHTGGAVEMQAPRDRWFHDVVDGQPAECEPERMNAEDPLFILYTSGSTGKPKGVLHTTAGYLLFASYTHEVVFDLREDDIYWCTADVGWVTGHSYIVYGPLANGATAVMFEGVPNYPNVSRFWEVIDKHQVTIFYTAPTAIRALMRDGAEPVKKTSRKSLRLLGSVGEPINPEAWRWYYDVVGDSRCPIVDTWWQTETGGILISPLAGAVDLKPGSATLPFFGVQPALVDAEGKILEGATEGNLVLLDSWPGQMRSVYGDHQRFIDTYFRTYPGSYFTGDGCRRDADGYYWITGRVDDVINVSGHRIGTAEVESALVSHPKVAEAAVVGFPHDVKGQGIYAYVTLIAGETPSDELHKELVSWVRKEIGPIASPDHLQWAPGLPKTRSGKIMRRILRKIAENAPDQLGDTSTLADPSVVDSLVNERLTR</sequence>
<accession>Q2NXE2</accession>
<gene>
    <name evidence="1" type="primary">acsA</name>
    <name type="ordered locus">XOO4280</name>
</gene>
<keyword id="KW-0007">Acetylation</keyword>
<keyword id="KW-0067">ATP-binding</keyword>
<keyword id="KW-0436">Ligase</keyword>
<keyword id="KW-0460">Magnesium</keyword>
<keyword id="KW-0479">Metal-binding</keyword>
<keyword id="KW-0547">Nucleotide-binding</keyword>
<protein>
    <recommendedName>
        <fullName evidence="1">Acetyl-coenzyme A synthetase</fullName>
        <shortName evidence="1">AcCoA synthetase</shortName>
        <shortName evidence="1">Acs</shortName>
        <ecNumber evidence="1">6.2.1.1</ecNumber>
    </recommendedName>
    <alternativeName>
        <fullName evidence="1">Acetate--CoA ligase</fullName>
    </alternativeName>
    <alternativeName>
        <fullName evidence="1">Acyl-activating enzyme</fullName>
    </alternativeName>
</protein>
<dbReference type="EC" id="6.2.1.1" evidence="1"/>
<dbReference type="EMBL" id="AP008229">
    <property type="protein sequence ID" value="BAE71035.1"/>
    <property type="molecule type" value="Genomic_DNA"/>
</dbReference>
<dbReference type="SMR" id="Q2NXE2"/>
<dbReference type="KEGG" id="xom:XOO4280"/>
<dbReference type="HOGENOM" id="CLU_000022_3_6_6"/>
<dbReference type="GO" id="GO:0005829">
    <property type="term" value="C:cytosol"/>
    <property type="evidence" value="ECO:0007669"/>
    <property type="project" value="TreeGrafter"/>
</dbReference>
<dbReference type="GO" id="GO:0003987">
    <property type="term" value="F:acetate-CoA ligase activity"/>
    <property type="evidence" value="ECO:0007669"/>
    <property type="project" value="UniProtKB-UniRule"/>
</dbReference>
<dbReference type="GO" id="GO:0016208">
    <property type="term" value="F:AMP binding"/>
    <property type="evidence" value="ECO:0007669"/>
    <property type="project" value="InterPro"/>
</dbReference>
<dbReference type="GO" id="GO:0005524">
    <property type="term" value="F:ATP binding"/>
    <property type="evidence" value="ECO:0007669"/>
    <property type="project" value="UniProtKB-KW"/>
</dbReference>
<dbReference type="GO" id="GO:0046872">
    <property type="term" value="F:metal ion binding"/>
    <property type="evidence" value="ECO:0007669"/>
    <property type="project" value="UniProtKB-KW"/>
</dbReference>
<dbReference type="GO" id="GO:0019427">
    <property type="term" value="P:acetyl-CoA biosynthetic process from acetate"/>
    <property type="evidence" value="ECO:0007669"/>
    <property type="project" value="InterPro"/>
</dbReference>
<dbReference type="CDD" id="cd05966">
    <property type="entry name" value="ACS"/>
    <property type="match status" value="1"/>
</dbReference>
<dbReference type="FunFam" id="3.30.300.30:FF:000004">
    <property type="entry name" value="Acetyl-coenzyme A synthetase"/>
    <property type="match status" value="1"/>
</dbReference>
<dbReference type="FunFam" id="3.40.50.12780:FF:000001">
    <property type="entry name" value="Acetyl-coenzyme A synthetase"/>
    <property type="match status" value="1"/>
</dbReference>
<dbReference type="Gene3D" id="3.30.300.30">
    <property type="match status" value="1"/>
</dbReference>
<dbReference type="Gene3D" id="3.40.50.12780">
    <property type="entry name" value="N-terminal domain of ligase-like"/>
    <property type="match status" value="1"/>
</dbReference>
<dbReference type="HAMAP" id="MF_01123">
    <property type="entry name" value="Ac_CoA_synth"/>
    <property type="match status" value="1"/>
</dbReference>
<dbReference type="InterPro" id="IPR011904">
    <property type="entry name" value="Ac_CoA_lig"/>
</dbReference>
<dbReference type="InterPro" id="IPR032387">
    <property type="entry name" value="ACAS_N"/>
</dbReference>
<dbReference type="InterPro" id="IPR025110">
    <property type="entry name" value="AMP-bd_C"/>
</dbReference>
<dbReference type="InterPro" id="IPR045851">
    <property type="entry name" value="AMP-bd_C_sf"/>
</dbReference>
<dbReference type="InterPro" id="IPR020845">
    <property type="entry name" value="AMP-binding_CS"/>
</dbReference>
<dbReference type="InterPro" id="IPR000873">
    <property type="entry name" value="AMP-dep_synth/lig_dom"/>
</dbReference>
<dbReference type="InterPro" id="IPR042099">
    <property type="entry name" value="ANL_N_sf"/>
</dbReference>
<dbReference type="NCBIfam" id="TIGR02188">
    <property type="entry name" value="Ac_CoA_lig_AcsA"/>
    <property type="match status" value="1"/>
</dbReference>
<dbReference type="NCBIfam" id="NF001208">
    <property type="entry name" value="PRK00174.1"/>
    <property type="match status" value="1"/>
</dbReference>
<dbReference type="PANTHER" id="PTHR24095">
    <property type="entry name" value="ACETYL-COENZYME A SYNTHETASE"/>
    <property type="match status" value="1"/>
</dbReference>
<dbReference type="PANTHER" id="PTHR24095:SF14">
    <property type="entry name" value="ACETYL-COENZYME A SYNTHETASE 1"/>
    <property type="match status" value="1"/>
</dbReference>
<dbReference type="Pfam" id="PF16177">
    <property type="entry name" value="ACAS_N"/>
    <property type="match status" value="1"/>
</dbReference>
<dbReference type="Pfam" id="PF00501">
    <property type="entry name" value="AMP-binding"/>
    <property type="match status" value="1"/>
</dbReference>
<dbReference type="Pfam" id="PF13193">
    <property type="entry name" value="AMP-binding_C"/>
    <property type="match status" value="1"/>
</dbReference>
<dbReference type="SUPFAM" id="SSF56801">
    <property type="entry name" value="Acetyl-CoA synthetase-like"/>
    <property type="match status" value="1"/>
</dbReference>
<dbReference type="PROSITE" id="PS00455">
    <property type="entry name" value="AMP_BINDING"/>
    <property type="match status" value="1"/>
</dbReference>
<name>ACSA_XANOM</name>
<comment type="function">
    <text evidence="1">Catalyzes the conversion of acetate into acetyl-CoA (AcCoA), an essential intermediate at the junction of anabolic and catabolic pathways. AcsA undergoes a two-step reaction. In the first half reaction, AcsA combines acetate with ATP to form acetyl-adenylate (AcAMP) intermediate. In the second half reaction, it can then transfer the acetyl group from AcAMP to the sulfhydryl group of CoA, forming the product AcCoA.</text>
</comment>
<comment type="catalytic activity">
    <reaction evidence="1">
        <text>acetate + ATP + CoA = acetyl-CoA + AMP + diphosphate</text>
        <dbReference type="Rhea" id="RHEA:23176"/>
        <dbReference type="ChEBI" id="CHEBI:30089"/>
        <dbReference type="ChEBI" id="CHEBI:30616"/>
        <dbReference type="ChEBI" id="CHEBI:33019"/>
        <dbReference type="ChEBI" id="CHEBI:57287"/>
        <dbReference type="ChEBI" id="CHEBI:57288"/>
        <dbReference type="ChEBI" id="CHEBI:456215"/>
        <dbReference type="EC" id="6.2.1.1"/>
    </reaction>
</comment>
<comment type="cofactor">
    <cofactor evidence="1">
        <name>Mg(2+)</name>
        <dbReference type="ChEBI" id="CHEBI:18420"/>
    </cofactor>
</comment>
<comment type="PTM">
    <text evidence="1">Acetylated. Deacetylation by the SIR2-homolog deacetylase activates the enzyme.</text>
</comment>
<comment type="similarity">
    <text evidence="1">Belongs to the ATP-dependent AMP-binding enzyme family.</text>
</comment>
<proteinExistence type="inferred from homology"/>
<evidence type="ECO:0000255" key="1">
    <source>
        <dbReference type="HAMAP-Rule" id="MF_01123"/>
    </source>
</evidence>